<gene>
    <name type="ORF">IIV6-049L</name>
</gene>
<name>049L_IIV6</name>
<protein>
    <recommendedName>
        <fullName>Transmembrane protein 049L</fullName>
    </recommendedName>
</protein>
<dbReference type="EMBL" id="AF303741">
    <property type="protein sequence ID" value="AAK81982.1"/>
    <property type="molecule type" value="Genomic_DNA"/>
</dbReference>
<dbReference type="RefSeq" id="NP_149512.1">
    <property type="nucleotide sequence ID" value="NC_003038.1"/>
</dbReference>
<dbReference type="SMR" id="Q91G50"/>
<dbReference type="KEGG" id="vg:1733420"/>
<dbReference type="OrthoDB" id="27503at10239"/>
<dbReference type="Proteomes" id="UP000001359">
    <property type="component" value="Genome"/>
</dbReference>
<dbReference type="GO" id="GO:0016020">
    <property type="term" value="C:membrane"/>
    <property type="evidence" value="ECO:0007669"/>
    <property type="project" value="UniProtKB-SubCell"/>
</dbReference>
<dbReference type="GO" id="GO:0034257">
    <property type="term" value="F:nicotinamide riboside transmembrane transporter activity"/>
    <property type="evidence" value="ECO:0007669"/>
    <property type="project" value="InterPro"/>
</dbReference>
<dbReference type="InterPro" id="IPR006419">
    <property type="entry name" value="NMN_transpt_PnuC"/>
</dbReference>
<dbReference type="Pfam" id="PF04973">
    <property type="entry name" value="NMN_transporter"/>
    <property type="match status" value="1"/>
</dbReference>
<comment type="subcellular location">
    <subcellularLocation>
        <location evidence="2">Membrane</location>
        <topology evidence="2">Multi-pass membrane protein</topology>
    </subcellularLocation>
</comment>
<organismHost>
    <name type="scientific">Acheta domesticus</name>
    <name type="common">House cricket</name>
    <dbReference type="NCBI Taxonomy" id="6997"/>
</organismHost>
<organismHost>
    <name type="scientific">Chilo suppressalis</name>
    <name type="common">Asiatic rice borer moth</name>
    <dbReference type="NCBI Taxonomy" id="168631"/>
</organismHost>
<organismHost>
    <name type="scientific">Gryllus bimaculatus</name>
    <name type="common">Two-spotted cricket</name>
    <dbReference type="NCBI Taxonomy" id="6999"/>
</organismHost>
<organismHost>
    <name type="scientific">Gryllus campestris</name>
    <dbReference type="NCBI Taxonomy" id="58607"/>
</organismHost>
<organismHost>
    <name type="scientific">Spodoptera frugiperda</name>
    <name type="common">Fall armyworm</name>
    <dbReference type="NCBI Taxonomy" id="7108"/>
</organismHost>
<organism>
    <name type="scientific">Invertebrate iridescent virus 6</name>
    <name type="common">IIV-6</name>
    <name type="synonym">Chilo iridescent virus</name>
    <dbReference type="NCBI Taxonomy" id="176652"/>
    <lineage>
        <taxon>Viruses</taxon>
        <taxon>Varidnaviria</taxon>
        <taxon>Bamfordvirae</taxon>
        <taxon>Nucleocytoviricota</taxon>
        <taxon>Megaviricetes</taxon>
        <taxon>Pimascovirales</taxon>
        <taxon>Iridoviridae</taxon>
        <taxon>Betairidovirinae</taxon>
        <taxon>Iridovirus</taxon>
    </lineage>
</organism>
<feature type="chain" id="PRO_0000377971" description="Transmembrane protein 049L">
    <location>
        <begin position="1"/>
        <end position="123"/>
    </location>
</feature>
<feature type="transmembrane region" description="Helical" evidence="1">
    <location>
        <begin position="67"/>
        <end position="87"/>
    </location>
</feature>
<feature type="transmembrane region" description="Helical" evidence="1">
    <location>
        <begin position="104"/>
        <end position="121"/>
    </location>
</feature>
<accession>Q91G50</accession>
<reference key="1">
    <citation type="journal article" date="2001" name="Virology">
        <title>Analysis of the first complete DNA sequence of an invertebrate iridovirus: coding strategy of the genome of Chilo iridescent virus.</title>
        <authorList>
            <person name="Jakob N.J."/>
            <person name="Mueller K."/>
            <person name="Bahr U."/>
            <person name="Darai G."/>
        </authorList>
    </citation>
    <scope>NUCLEOTIDE SEQUENCE [LARGE SCALE GENOMIC DNA]</scope>
</reference>
<reference key="2">
    <citation type="journal article" date="2007" name="Virol. J.">
        <title>Comparative genomic analysis of the family Iridoviridae: re-annotating and defining the core set of iridovirus genes.</title>
        <authorList>
            <person name="Eaton H.E."/>
            <person name="Metcalf J."/>
            <person name="Penny E."/>
            <person name="Tcherepanov V."/>
            <person name="Upton C."/>
            <person name="Brunetti C.R."/>
        </authorList>
    </citation>
    <scope>GENOME REANNOTATION</scope>
</reference>
<evidence type="ECO:0000255" key="1"/>
<evidence type="ECO:0000305" key="2"/>
<sequence length="123" mass="14309">MDKIEELKIEELKIEIPQRKTKFFHDSENSDKRDEEETLNPTITSKAKILIKSKNFWIETLIFVISVFGALCVAFGIMLIGFLLWLVSNTISILYFIKQKQYPLSLQQMVFLITTCIGVYNNV</sequence>
<keyword id="KW-0472">Membrane</keyword>
<keyword id="KW-1185">Reference proteome</keyword>
<keyword id="KW-0812">Transmembrane</keyword>
<keyword id="KW-1133">Transmembrane helix</keyword>
<proteinExistence type="predicted"/>